<proteinExistence type="inferred from homology"/>
<gene>
    <name evidence="1" type="primary">glmM</name>
    <name type="ordered locus">Exig_0140</name>
</gene>
<comment type="function">
    <text evidence="1">Catalyzes the conversion of glucosamine-6-phosphate to glucosamine-1-phosphate.</text>
</comment>
<comment type="catalytic activity">
    <reaction evidence="1">
        <text>alpha-D-glucosamine 1-phosphate = D-glucosamine 6-phosphate</text>
        <dbReference type="Rhea" id="RHEA:23424"/>
        <dbReference type="ChEBI" id="CHEBI:58516"/>
        <dbReference type="ChEBI" id="CHEBI:58725"/>
        <dbReference type="EC" id="5.4.2.10"/>
    </reaction>
</comment>
<comment type="cofactor">
    <cofactor evidence="1">
        <name>Mg(2+)</name>
        <dbReference type="ChEBI" id="CHEBI:18420"/>
    </cofactor>
    <text evidence="1">Binds 1 Mg(2+) ion per subunit.</text>
</comment>
<comment type="PTM">
    <text evidence="1">Activated by phosphorylation.</text>
</comment>
<comment type="similarity">
    <text evidence="1">Belongs to the phosphohexose mutase family.</text>
</comment>
<sequence>MGKYFGTDGVRGVANVELTPELAYRLGRTGGYVLTKHESTRPKVLIGRDTRVSGQMLENALIAGLLSIGAEVMRLGVISTPGVAYLTKTMDATAGVMISASHNPVEDNGIKFFGSDGFKLDDATELEIEGLLDEAEDTLPRPSGKELGFVHDYYEGAQKYLHMLRQTSDEDFSGIHVAIDGAHGATSSLAPRLFGDLEAEVSTIGTTPNGLNINEGVGSTHPEHLADFVLEKGADVGLSFDGDGDRLIAIDENGKIVDGDKIMFICGKYLNEIGRLKDNTIVATVMSNLGFHKTVAEHGMTALQTAVGDRYVVEEMRKNNYTLGGEQSGHIIFMDYSTTGDGMLSGVQLLQIMKATGKKLSELAAEMPVFPQRLVNIRVSDKNGAMNGPAVQAIIAEVEAEMAGNGRILVRASGTEPLVRVMAEAPTQEACDMYVERIANVVRENYALQEN</sequence>
<accession>B1YH95</accession>
<name>GLMM_EXIS2</name>
<evidence type="ECO:0000255" key="1">
    <source>
        <dbReference type="HAMAP-Rule" id="MF_01554"/>
    </source>
</evidence>
<dbReference type="EC" id="5.4.2.10" evidence="1"/>
<dbReference type="EMBL" id="CP001022">
    <property type="protein sequence ID" value="ACB59627.1"/>
    <property type="molecule type" value="Genomic_DNA"/>
</dbReference>
<dbReference type="RefSeq" id="WP_012369052.1">
    <property type="nucleotide sequence ID" value="NC_010556.1"/>
</dbReference>
<dbReference type="SMR" id="B1YH95"/>
<dbReference type="STRING" id="262543.Exig_0140"/>
<dbReference type="KEGG" id="esi:Exig_0140"/>
<dbReference type="eggNOG" id="COG1109">
    <property type="taxonomic scope" value="Bacteria"/>
</dbReference>
<dbReference type="HOGENOM" id="CLU_016950_7_0_9"/>
<dbReference type="OrthoDB" id="9806956at2"/>
<dbReference type="Proteomes" id="UP000001681">
    <property type="component" value="Chromosome"/>
</dbReference>
<dbReference type="GO" id="GO:0005829">
    <property type="term" value="C:cytosol"/>
    <property type="evidence" value="ECO:0007669"/>
    <property type="project" value="TreeGrafter"/>
</dbReference>
<dbReference type="GO" id="GO:0000287">
    <property type="term" value="F:magnesium ion binding"/>
    <property type="evidence" value="ECO:0007669"/>
    <property type="project" value="UniProtKB-UniRule"/>
</dbReference>
<dbReference type="GO" id="GO:0008966">
    <property type="term" value="F:phosphoglucosamine mutase activity"/>
    <property type="evidence" value="ECO:0007669"/>
    <property type="project" value="UniProtKB-UniRule"/>
</dbReference>
<dbReference type="GO" id="GO:0004615">
    <property type="term" value="F:phosphomannomutase activity"/>
    <property type="evidence" value="ECO:0007669"/>
    <property type="project" value="TreeGrafter"/>
</dbReference>
<dbReference type="GO" id="GO:0005975">
    <property type="term" value="P:carbohydrate metabolic process"/>
    <property type="evidence" value="ECO:0007669"/>
    <property type="project" value="InterPro"/>
</dbReference>
<dbReference type="GO" id="GO:0009252">
    <property type="term" value="P:peptidoglycan biosynthetic process"/>
    <property type="evidence" value="ECO:0007669"/>
    <property type="project" value="TreeGrafter"/>
</dbReference>
<dbReference type="GO" id="GO:0006048">
    <property type="term" value="P:UDP-N-acetylglucosamine biosynthetic process"/>
    <property type="evidence" value="ECO:0007669"/>
    <property type="project" value="TreeGrafter"/>
</dbReference>
<dbReference type="CDD" id="cd05802">
    <property type="entry name" value="GlmM"/>
    <property type="match status" value="1"/>
</dbReference>
<dbReference type="FunFam" id="3.30.310.50:FF:000001">
    <property type="entry name" value="Phosphoglucosamine mutase"/>
    <property type="match status" value="1"/>
</dbReference>
<dbReference type="FunFam" id="3.40.120.10:FF:000001">
    <property type="entry name" value="Phosphoglucosamine mutase"/>
    <property type="match status" value="1"/>
</dbReference>
<dbReference type="FunFam" id="3.40.120.10:FF:000002">
    <property type="entry name" value="Phosphoglucosamine mutase"/>
    <property type="match status" value="1"/>
</dbReference>
<dbReference type="Gene3D" id="3.40.120.10">
    <property type="entry name" value="Alpha-D-Glucose-1,6-Bisphosphate, subunit A, domain 3"/>
    <property type="match status" value="3"/>
</dbReference>
<dbReference type="Gene3D" id="3.30.310.50">
    <property type="entry name" value="Alpha-D-phosphohexomutase, C-terminal domain"/>
    <property type="match status" value="1"/>
</dbReference>
<dbReference type="HAMAP" id="MF_01554_B">
    <property type="entry name" value="GlmM_B"/>
    <property type="match status" value="1"/>
</dbReference>
<dbReference type="InterPro" id="IPR005844">
    <property type="entry name" value="A-D-PHexomutase_a/b/a-I"/>
</dbReference>
<dbReference type="InterPro" id="IPR016055">
    <property type="entry name" value="A-D-PHexomutase_a/b/a-I/II/III"/>
</dbReference>
<dbReference type="InterPro" id="IPR005845">
    <property type="entry name" value="A-D-PHexomutase_a/b/a-II"/>
</dbReference>
<dbReference type="InterPro" id="IPR005846">
    <property type="entry name" value="A-D-PHexomutase_a/b/a-III"/>
</dbReference>
<dbReference type="InterPro" id="IPR005843">
    <property type="entry name" value="A-D-PHexomutase_C"/>
</dbReference>
<dbReference type="InterPro" id="IPR036900">
    <property type="entry name" value="A-D-PHexomutase_C_sf"/>
</dbReference>
<dbReference type="InterPro" id="IPR016066">
    <property type="entry name" value="A-D-PHexomutase_CS"/>
</dbReference>
<dbReference type="InterPro" id="IPR005841">
    <property type="entry name" value="Alpha-D-phosphohexomutase_SF"/>
</dbReference>
<dbReference type="InterPro" id="IPR006352">
    <property type="entry name" value="GlmM_bact"/>
</dbReference>
<dbReference type="InterPro" id="IPR050060">
    <property type="entry name" value="Phosphoglucosamine_mutase"/>
</dbReference>
<dbReference type="NCBIfam" id="TIGR01455">
    <property type="entry name" value="glmM"/>
    <property type="match status" value="1"/>
</dbReference>
<dbReference type="NCBIfam" id="NF008139">
    <property type="entry name" value="PRK10887.1"/>
    <property type="match status" value="1"/>
</dbReference>
<dbReference type="PANTHER" id="PTHR42946:SF1">
    <property type="entry name" value="PHOSPHOGLUCOMUTASE (ALPHA-D-GLUCOSE-1,6-BISPHOSPHATE-DEPENDENT)"/>
    <property type="match status" value="1"/>
</dbReference>
<dbReference type="PANTHER" id="PTHR42946">
    <property type="entry name" value="PHOSPHOHEXOSE MUTASE"/>
    <property type="match status" value="1"/>
</dbReference>
<dbReference type="Pfam" id="PF02878">
    <property type="entry name" value="PGM_PMM_I"/>
    <property type="match status" value="1"/>
</dbReference>
<dbReference type="Pfam" id="PF02879">
    <property type="entry name" value="PGM_PMM_II"/>
    <property type="match status" value="1"/>
</dbReference>
<dbReference type="Pfam" id="PF02880">
    <property type="entry name" value="PGM_PMM_III"/>
    <property type="match status" value="1"/>
</dbReference>
<dbReference type="Pfam" id="PF00408">
    <property type="entry name" value="PGM_PMM_IV"/>
    <property type="match status" value="1"/>
</dbReference>
<dbReference type="PRINTS" id="PR00509">
    <property type="entry name" value="PGMPMM"/>
</dbReference>
<dbReference type="SUPFAM" id="SSF55957">
    <property type="entry name" value="Phosphoglucomutase, C-terminal domain"/>
    <property type="match status" value="1"/>
</dbReference>
<dbReference type="SUPFAM" id="SSF53738">
    <property type="entry name" value="Phosphoglucomutase, first 3 domains"/>
    <property type="match status" value="3"/>
</dbReference>
<dbReference type="PROSITE" id="PS00710">
    <property type="entry name" value="PGM_PMM"/>
    <property type="match status" value="1"/>
</dbReference>
<protein>
    <recommendedName>
        <fullName evidence="1">Phosphoglucosamine mutase</fullName>
        <ecNumber evidence="1">5.4.2.10</ecNumber>
    </recommendedName>
</protein>
<reference key="1">
    <citation type="submission" date="2008-04" db="EMBL/GenBank/DDBJ databases">
        <title>Complete sequence of chromosome of Exiguobacterium sibiricum 255-15.</title>
        <authorList>
            <consortium name="US DOE Joint Genome Institute"/>
            <person name="Copeland A."/>
            <person name="Lucas S."/>
            <person name="Lapidus A."/>
            <person name="Glavina del Rio T."/>
            <person name="Dalin E."/>
            <person name="Tice H."/>
            <person name="Bruce D."/>
            <person name="Goodwin L."/>
            <person name="Pitluck S."/>
            <person name="Kiss H."/>
            <person name="Chertkov O."/>
            <person name="Monk C."/>
            <person name="Brettin T."/>
            <person name="Detter J.C."/>
            <person name="Han C."/>
            <person name="Kuske C.R."/>
            <person name="Schmutz J."/>
            <person name="Larimer F."/>
            <person name="Land M."/>
            <person name="Hauser L."/>
            <person name="Kyrpides N."/>
            <person name="Mikhailova N."/>
            <person name="Vishnivetskaya T."/>
            <person name="Rodrigues D.F."/>
            <person name="Gilichinsky D."/>
            <person name="Tiedje J."/>
            <person name="Richardson P."/>
        </authorList>
    </citation>
    <scope>NUCLEOTIDE SEQUENCE [LARGE SCALE GENOMIC DNA]</scope>
    <source>
        <strain>DSM 17290 / CCUG 55495 / CIP 109462 / JCM 13490 / 255-15</strain>
    </source>
</reference>
<feature type="chain" id="PRO_1000201099" description="Phosphoglucosamine mutase">
    <location>
        <begin position="1"/>
        <end position="451"/>
    </location>
</feature>
<feature type="active site" description="Phosphoserine intermediate" evidence="1">
    <location>
        <position position="101"/>
    </location>
</feature>
<feature type="binding site" description="via phosphate group" evidence="1">
    <location>
        <position position="101"/>
    </location>
    <ligand>
        <name>Mg(2+)</name>
        <dbReference type="ChEBI" id="CHEBI:18420"/>
    </ligand>
</feature>
<feature type="binding site" evidence="1">
    <location>
        <position position="241"/>
    </location>
    <ligand>
        <name>Mg(2+)</name>
        <dbReference type="ChEBI" id="CHEBI:18420"/>
    </ligand>
</feature>
<feature type="binding site" evidence="1">
    <location>
        <position position="243"/>
    </location>
    <ligand>
        <name>Mg(2+)</name>
        <dbReference type="ChEBI" id="CHEBI:18420"/>
    </ligand>
</feature>
<feature type="binding site" evidence="1">
    <location>
        <position position="245"/>
    </location>
    <ligand>
        <name>Mg(2+)</name>
        <dbReference type="ChEBI" id="CHEBI:18420"/>
    </ligand>
</feature>
<feature type="modified residue" description="Phosphoserine" evidence="1">
    <location>
        <position position="101"/>
    </location>
</feature>
<keyword id="KW-0413">Isomerase</keyword>
<keyword id="KW-0460">Magnesium</keyword>
<keyword id="KW-0479">Metal-binding</keyword>
<keyword id="KW-0597">Phosphoprotein</keyword>
<keyword id="KW-1185">Reference proteome</keyword>
<organism>
    <name type="scientific">Exiguobacterium sibiricum (strain DSM 17290 / CCUG 55495 / CIP 109462 / JCM 13490 / 255-15)</name>
    <dbReference type="NCBI Taxonomy" id="262543"/>
    <lineage>
        <taxon>Bacteria</taxon>
        <taxon>Bacillati</taxon>
        <taxon>Bacillota</taxon>
        <taxon>Bacilli</taxon>
        <taxon>Bacillales</taxon>
        <taxon>Bacillales Family XII. Incertae Sedis</taxon>
        <taxon>Exiguobacterium</taxon>
    </lineage>
</organism>